<gene>
    <name evidence="1" type="primary">atpB</name>
    <name evidence="1" type="synonym">atpI</name>
    <name type="ordered locus">NATL1_18541</name>
</gene>
<feature type="chain" id="PRO_0000362383" description="ATP synthase subunit a">
    <location>
        <begin position="1"/>
        <end position="241"/>
    </location>
</feature>
<feature type="transmembrane region" description="Helical" evidence="1">
    <location>
        <begin position="30"/>
        <end position="50"/>
    </location>
</feature>
<feature type="transmembrane region" description="Helical" evidence="1">
    <location>
        <begin position="91"/>
        <end position="111"/>
    </location>
</feature>
<feature type="transmembrane region" description="Helical" evidence="1">
    <location>
        <begin position="128"/>
        <end position="148"/>
    </location>
</feature>
<feature type="transmembrane region" description="Helical" evidence="1">
    <location>
        <begin position="193"/>
        <end position="213"/>
    </location>
</feature>
<feature type="transmembrane region" description="Helical" evidence="1">
    <location>
        <begin position="214"/>
        <end position="234"/>
    </location>
</feature>
<accession>A2C4K0</accession>
<keyword id="KW-0066">ATP synthesis</keyword>
<keyword id="KW-0138">CF(0)</keyword>
<keyword id="KW-0375">Hydrogen ion transport</keyword>
<keyword id="KW-0406">Ion transport</keyword>
<keyword id="KW-0472">Membrane</keyword>
<keyword id="KW-0793">Thylakoid</keyword>
<keyword id="KW-0812">Transmembrane</keyword>
<keyword id="KW-1133">Transmembrane helix</keyword>
<keyword id="KW-0813">Transport</keyword>
<name>ATP6_PROM1</name>
<comment type="function">
    <text evidence="1">Key component of the proton channel; it plays a direct role in the translocation of protons across the membrane.</text>
</comment>
<comment type="subunit">
    <text evidence="1">F-type ATPases have 2 components, CF(1) - the catalytic core - and CF(0) - the membrane proton channel. CF(1) has five subunits: alpha(3), beta(3), gamma(1), delta(1), epsilon(1). CF(0) has four main subunits: a, b, b' and c.</text>
</comment>
<comment type="subcellular location">
    <subcellularLocation>
        <location evidence="1">Cellular thylakoid membrane</location>
        <topology evidence="1">Multi-pass membrane protein</topology>
    </subcellularLocation>
</comment>
<comment type="similarity">
    <text evidence="1">Belongs to the ATPase A chain family.</text>
</comment>
<evidence type="ECO:0000255" key="1">
    <source>
        <dbReference type="HAMAP-Rule" id="MF_01393"/>
    </source>
</evidence>
<dbReference type="EMBL" id="CP000553">
    <property type="protein sequence ID" value="ABM76410.1"/>
    <property type="molecule type" value="Genomic_DNA"/>
</dbReference>
<dbReference type="RefSeq" id="WP_011295331.1">
    <property type="nucleotide sequence ID" value="NC_008819.1"/>
</dbReference>
<dbReference type="SMR" id="A2C4K0"/>
<dbReference type="KEGG" id="pme:NATL1_18541"/>
<dbReference type="eggNOG" id="COG0356">
    <property type="taxonomic scope" value="Bacteria"/>
</dbReference>
<dbReference type="HOGENOM" id="CLU_041018_2_4_3"/>
<dbReference type="Proteomes" id="UP000002592">
    <property type="component" value="Chromosome"/>
</dbReference>
<dbReference type="GO" id="GO:0031676">
    <property type="term" value="C:plasma membrane-derived thylakoid membrane"/>
    <property type="evidence" value="ECO:0007669"/>
    <property type="project" value="UniProtKB-SubCell"/>
</dbReference>
<dbReference type="GO" id="GO:0045259">
    <property type="term" value="C:proton-transporting ATP synthase complex"/>
    <property type="evidence" value="ECO:0007669"/>
    <property type="project" value="UniProtKB-KW"/>
</dbReference>
<dbReference type="GO" id="GO:0046933">
    <property type="term" value="F:proton-transporting ATP synthase activity, rotational mechanism"/>
    <property type="evidence" value="ECO:0007669"/>
    <property type="project" value="UniProtKB-UniRule"/>
</dbReference>
<dbReference type="CDD" id="cd00310">
    <property type="entry name" value="ATP-synt_Fo_a_6"/>
    <property type="match status" value="1"/>
</dbReference>
<dbReference type="FunFam" id="1.20.120.220:FF:000001">
    <property type="entry name" value="ATP synthase subunit a, chloroplastic"/>
    <property type="match status" value="1"/>
</dbReference>
<dbReference type="Gene3D" id="1.20.120.220">
    <property type="entry name" value="ATP synthase, F0 complex, subunit A"/>
    <property type="match status" value="1"/>
</dbReference>
<dbReference type="HAMAP" id="MF_01393">
    <property type="entry name" value="ATP_synth_a_bact"/>
    <property type="match status" value="1"/>
</dbReference>
<dbReference type="InterPro" id="IPR045082">
    <property type="entry name" value="ATP_syn_F0_a_bact/chloroplast"/>
</dbReference>
<dbReference type="InterPro" id="IPR000568">
    <property type="entry name" value="ATP_synth_F0_asu"/>
</dbReference>
<dbReference type="InterPro" id="IPR023011">
    <property type="entry name" value="ATP_synth_F0_asu_AS"/>
</dbReference>
<dbReference type="InterPro" id="IPR035908">
    <property type="entry name" value="F0_ATP_A_sf"/>
</dbReference>
<dbReference type="NCBIfam" id="TIGR01131">
    <property type="entry name" value="ATP_synt_6_or_A"/>
    <property type="match status" value="1"/>
</dbReference>
<dbReference type="PANTHER" id="PTHR42823">
    <property type="entry name" value="ATP SYNTHASE SUBUNIT A, CHLOROPLASTIC"/>
    <property type="match status" value="1"/>
</dbReference>
<dbReference type="PANTHER" id="PTHR42823:SF3">
    <property type="entry name" value="ATP SYNTHASE SUBUNIT A, CHLOROPLASTIC"/>
    <property type="match status" value="1"/>
</dbReference>
<dbReference type="Pfam" id="PF00119">
    <property type="entry name" value="ATP-synt_A"/>
    <property type="match status" value="1"/>
</dbReference>
<dbReference type="PRINTS" id="PR00123">
    <property type="entry name" value="ATPASEA"/>
</dbReference>
<dbReference type="SUPFAM" id="SSF81336">
    <property type="entry name" value="F1F0 ATP synthase subunit A"/>
    <property type="match status" value="1"/>
</dbReference>
<dbReference type="PROSITE" id="PS00449">
    <property type="entry name" value="ATPASE_A"/>
    <property type="match status" value="1"/>
</dbReference>
<proteinExistence type="inferred from homology"/>
<sequence>MGFLPFVFPFAELEVGQQLYWQIGNFRIHGQVFMTSWLLIGALLALVVIGTKKMERDPRGVQNLLEFLWDYIRDLARTQIGEKVYRDWMPFIGTLFLFIFVSNWGGALVPWKLIKLPSGELGAPTADINTTVALALLVSLSYFYAGLSNKGLRYFEYYVHPTPIMLPFKIVEDFTKPLSLSFRLFGNILADELVVAVLVFLVPLVLPVPVMFLGLFTSAIQALIFATLAAYYIGEAVEEHH</sequence>
<reference key="1">
    <citation type="journal article" date="2007" name="PLoS Genet.">
        <title>Patterns and implications of gene gain and loss in the evolution of Prochlorococcus.</title>
        <authorList>
            <person name="Kettler G.C."/>
            <person name="Martiny A.C."/>
            <person name="Huang K."/>
            <person name="Zucker J."/>
            <person name="Coleman M.L."/>
            <person name="Rodrigue S."/>
            <person name="Chen F."/>
            <person name="Lapidus A."/>
            <person name="Ferriera S."/>
            <person name="Johnson J."/>
            <person name="Steglich C."/>
            <person name="Church G.M."/>
            <person name="Richardson P."/>
            <person name="Chisholm S.W."/>
        </authorList>
    </citation>
    <scope>NUCLEOTIDE SEQUENCE [LARGE SCALE GENOMIC DNA]</scope>
    <source>
        <strain>NATL1A</strain>
    </source>
</reference>
<protein>
    <recommendedName>
        <fullName evidence="1">ATP synthase subunit a</fullName>
    </recommendedName>
    <alternativeName>
        <fullName evidence="1">ATP synthase F0 sector subunit a</fullName>
    </alternativeName>
    <alternativeName>
        <fullName evidence="1">F-ATPase subunit 6</fullName>
    </alternativeName>
</protein>
<organism>
    <name type="scientific">Prochlorococcus marinus (strain NATL1A)</name>
    <dbReference type="NCBI Taxonomy" id="167555"/>
    <lineage>
        <taxon>Bacteria</taxon>
        <taxon>Bacillati</taxon>
        <taxon>Cyanobacteriota</taxon>
        <taxon>Cyanophyceae</taxon>
        <taxon>Synechococcales</taxon>
        <taxon>Prochlorococcaceae</taxon>
        <taxon>Prochlorococcus</taxon>
    </lineage>
</organism>